<accession>B7MZ55</accession>
<feature type="chain" id="PRO_1000147965" description="Glycine dehydrogenase (decarboxylating)">
    <location>
        <begin position="1"/>
        <end position="957"/>
    </location>
</feature>
<feature type="modified residue" description="N6-(pyridoxal phosphate)lysine" evidence="1">
    <location>
        <position position="708"/>
    </location>
</feature>
<name>GCSP_ECO81</name>
<sequence>MTQTLSQLENSGAFIERHIGPDAAQQQEMLNAVGAQSLNALTGQIVPKDIQLATPPQVGAPATEYAALAELKAIASRNKRFTSYIGMGYTAVQLPPVILRNMLENPGWYTAYTPYQPEVSQGRLEALLNFQQVTLDLTGLDMASASLLDEATAAAEAMAMAKRVSKLKNANRFFVASDVHPQTLDVVRTRAETFGFEVIVDDAQKVLDHQDVFGVLLQQVGTTGEIHDYTALISELKSRKIVVSVAADIMALVLLTAPGKQGADIVFGSAQRFGVPMGYGGPHAAFFAAKDEYKRSMPGRIIGVSKDAAGNTALRMAMQTREQHIRREKANSNICTSQVLLANIASLYAVYHGPVGLKRIANRIHRLTDILAAGLQQKGLKLRHAHYFDTLCVEVADKAGVLARAEAAEINLRSDILNAVGITLDETTTRENVMQLFSVLLGDNHGLDIDTLDKDVAHDSRSIQAAMLRDDEILTHPVFNRYHSETEMMRYMHSLERKDLALNQAMIPLGSCTMKLNAAAEMIPITWPEFAELHPFCPPEQAEGYQQMIAQLADWLVKLTGYDAVCMQPNSGAQGEYAGLLAIRHYHESRNEGHRDICLIPASAHGTNPASAHMAGMQVVVVACDKNGNIDLTDLRAKAEQAGDNLSCIMVTYPSTHGVYEETIREVCEVVHQFGGQVYLDGANMNAQVGITSPGFIGADVSHLNLHKTFCIPHGGGGPGMGPIGVKAHLAPFVPGHSVVQIEGMLTRQGAVSAAPFGSASILPISWMYIRMMGAEGLKKASQVAILNANYIASRLQDAFPVLYTGRDGRVAHECILDIRPLKEETGISELDIAKRLIDYGFHAPTMSFPVAGTLMVEPTESESKVELDRFIDAMLAIRAEIDQVKAGVWPLEDNPLVNAPHIQSELVAEWAHPYSREVAVFPAGVADKYWPTVKRLDDVYGDRNLFCSCVPISEYQ</sequence>
<keyword id="KW-0560">Oxidoreductase</keyword>
<keyword id="KW-0663">Pyridoxal phosphate</keyword>
<gene>
    <name evidence="1" type="primary">gcvP</name>
    <name type="ordered locus">ECED1_3361</name>
</gene>
<dbReference type="EC" id="1.4.4.2" evidence="1"/>
<dbReference type="EMBL" id="CU928162">
    <property type="protein sequence ID" value="CAR09372.1"/>
    <property type="molecule type" value="Genomic_DNA"/>
</dbReference>
<dbReference type="RefSeq" id="WP_000195034.1">
    <property type="nucleotide sequence ID" value="NC_011745.1"/>
</dbReference>
<dbReference type="SMR" id="B7MZ55"/>
<dbReference type="KEGG" id="ecq:ECED1_3361"/>
<dbReference type="HOGENOM" id="CLU_004620_1_1_6"/>
<dbReference type="Proteomes" id="UP000000748">
    <property type="component" value="Chromosome"/>
</dbReference>
<dbReference type="GO" id="GO:0005829">
    <property type="term" value="C:cytosol"/>
    <property type="evidence" value="ECO:0007669"/>
    <property type="project" value="TreeGrafter"/>
</dbReference>
<dbReference type="GO" id="GO:0005960">
    <property type="term" value="C:glycine cleavage complex"/>
    <property type="evidence" value="ECO:0007669"/>
    <property type="project" value="TreeGrafter"/>
</dbReference>
<dbReference type="GO" id="GO:0016594">
    <property type="term" value="F:glycine binding"/>
    <property type="evidence" value="ECO:0007669"/>
    <property type="project" value="TreeGrafter"/>
</dbReference>
<dbReference type="GO" id="GO:0004375">
    <property type="term" value="F:glycine dehydrogenase (decarboxylating) activity"/>
    <property type="evidence" value="ECO:0007669"/>
    <property type="project" value="UniProtKB-EC"/>
</dbReference>
<dbReference type="GO" id="GO:0030170">
    <property type="term" value="F:pyridoxal phosphate binding"/>
    <property type="evidence" value="ECO:0007669"/>
    <property type="project" value="TreeGrafter"/>
</dbReference>
<dbReference type="GO" id="GO:0019464">
    <property type="term" value="P:glycine decarboxylation via glycine cleavage system"/>
    <property type="evidence" value="ECO:0007669"/>
    <property type="project" value="UniProtKB-UniRule"/>
</dbReference>
<dbReference type="CDD" id="cd00613">
    <property type="entry name" value="GDC-P"/>
    <property type="match status" value="2"/>
</dbReference>
<dbReference type="FunFam" id="3.40.640.10:FF:000005">
    <property type="entry name" value="Glycine dehydrogenase (decarboxylating), mitochondrial"/>
    <property type="match status" value="1"/>
</dbReference>
<dbReference type="FunFam" id="3.90.1150.10:FF:000007">
    <property type="entry name" value="Glycine dehydrogenase (decarboxylating), mitochondrial"/>
    <property type="match status" value="1"/>
</dbReference>
<dbReference type="FunFam" id="3.40.640.10:FF:000007">
    <property type="entry name" value="glycine dehydrogenase (Decarboxylating), mitochondrial"/>
    <property type="match status" value="1"/>
</dbReference>
<dbReference type="Gene3D" id="3.90.1150.10">
    <property type="entry name" value="Aspartate Aminotransferase, domain 1"/>
    <property type="match status" value="1"/>
</dbReference>
<dbReference type="Gene3D" id="3.40.640.10">
    <property type="entry name" value="Type I PLP-dependent aspartate aminotransferase-like (Major domain)"/>
    <property type="match status" value="2"/>
</dbReference>
<dbReference type="HAMAP" id="MF_00711">
    <property type="entry name" value="GcvP"/>
    <property type="match status" value="1"/>
</dbReference>
<dbReference type="InterPro" id="IPR003437">
    <property type="entry name" value="GcvP"/>
</dbReference>
<dbReference type="InterPro" id="IPR049316">
    <property type="entry name" value="GDC-P_C"/>
</dbReference>
<dbReference type="InterPro" id="IPR049315">
    <property type="entry name" value="GDC-P_N"/>
</dbReference>
<dbReference type="InterPro" id="IPR020581">
    <property type="entry name" value="GDC_P"/>
</dbReference>
<dbReference type="InterPro" id="IPR015424">
    <property type="entry name" value="PyrdxlP-dep_Trfase"/>
</dbReference>
<dbReference type="InterPro" id="IPR015421">
    <property type="entry name" value="PyrdxlP-dep_Trfase_major"/>
</dbReference>
<dbReference type="InterPro" id="IPR015422">
    <property type="entry name" value="PyrdxlP-dep_Trfase_small"/>
</dbReference>
<dbReference type="NCBIfam" id="TIGR00461">
    <property type="entry name" value="gcvP"/>
    <property type="match status" value="1"/>
</dbReference>
<dbReference type="NCBIfam" id="NF003346">
    <property type="entry name" value="PRK04366.1"/>
    <property type="match status" value="1"/>
</dbReference>
<dbReference type="PANTHER" id="PTHR11773:SF13">
    <property type="entry name" value="GLYCINE DEHYDROGENASE (DECARBOXYLATING)"/>
    <property type="match status" value="1"/>
</dbReference>
<dbReference type="PANTHER" id="PTHR11773">
    <property type="entry name" value="GLYCINE DEHYDROGENASE, DECARBOXYLATING"/>
    <property type="match status" value="1"/>
</dbReference>
<dbReference type="Pfam" id="PF21478">
    <property type="entry name" value="GcvP2_C"/>
    <property type="match status" value="1"/>
</dbReference>
<dbReference type="Pfam" id="PF02347">
    <property type="entry name" value="GDC-P"/>
    <property type="match status" value="2"/>
</dbReference>
<dbReference type="SUPFAM" id="SSF53383">
    <property type="entry name" value="PLP-dependent transferases"/>
    <property type="match status" value="2"/>
</dbReference>
<comment type="function">
    <text evidence="1">The glycine cleavage system catalyzes the degradation of glycine. The P protein binds the alpha-amino group of glycine through its pyridoxal phosphate cofactor; CO(2) is released and the remaining methylamine moiety is then transferred to the lipoamide cofactor of the H protein.</text>
</comment>
<comment type="catalytic activity">
    <reaction evidence="1">
        <text>N(6)-[(R)-lipoyl]-L-lysyl-[glycine-cleavage complex H protein] + glycine + H(+) = N(6)-[(R)-S(8)-aminomethyldihydrolipoyl]-L-lysyl-[glycine-cleavage complex H protein] + CO2</text>
        <dbReference type="Rhea" id="RHEA:24304"/>
        <dbReference type="Rhea" id="RHEA-COMP:10494"/>
        <dbReference type="Rhea" id="RHEA-COMP:10495"/>
        <dbReference type="ChEBI" id="CHEBI:15378"/>
        <dbReference type="ChEBI" id="CHEBI:16526"/>
        <dbReference type="ChEBI" id="CHEBI:57305"/>
        <dbReference type="ChEBI" id="CHEBI:83099"/>
        <dbReference type="ChEBI" id="CHEBI:83143"/>
        <dbReference type="EC" id="1.4.4.2"/>
    </reaction>
</comment>
<comment type="cofactor">
    <cofactor evidence="1">
        <name>pyridoxal 5'-phosphate</name>
        <dbReference type="ChEBI" id="CHEBI:597326"/>
    </cofactor>
</comment>
<comment type="subunit">
    <text evidence="1">The glycine cleavage system is composed of four proteins: P, T, L and H.</text>
</comment>
<comment type="similarity">
    <text evidence="1">Belongs to the GcvP family.</text>
</comment>
<organism>
    <name type="scientific">Escherichia coli O81 (strain ED1a)</name>
    <dbReference type="NCBI Taxonomy" id="585397"/>
    <lineage>
        <taxon>Bacteria</taxon>
        <taxon>Pseudomonadati</taxon>
        <taxon>Pseudomonadota</taxon>
        <taxon>Gammaproteobacteria</taxon>
        <taxon>Enterobacterales</taxon>
        <taxon>Enterobacteriaceae</taxon>
        <taxon>Escherichia</taxon>
    </lineage>
</organism>
<protein>
    <recommendedName>
        <fullName evidence="1">Glycine dehydrogenase (decarboxylating)</fullName>
        <ecNumber evidence="1">1.4.4.2</ecNumber>
    </recommendedName>
    <alternativeName>
        <fullName evidence="1">Glycine cleavage system P-protein</fullName>
    </alternativeName>
    <alternativeName>
        <fullName evidence="1">Glycine decarboxylase</fullName>
    </alternativeName>
    <alternativeName>
        <fullName evidence="1">Glycine dehydrogenase (aminomethyl-transferring)</fullName>
    </alternativeName>
</protein>
<proteinExistence type="inferred from homology"/>
<reference key="1">
    <citation type="journal article" date="2009" name="PLoS Genet.">
        <title>Organised genome dynamics in the Escherichia coli species results in highly diverse adaptive paths.</title>
        <authorList>
            <person name="Touchon M."/>
            <person name="Hoede C."/>
            <person name="Tenaillon O."/>
            <person name="Barbe V."/>
            <person name="Baeriswyl S."/>
            <person name="Bidet P."/>
            <person name="Bingen E."/>
            <person name="Bonacorsi S."/>
            <person name="Bouchier C."/>
            <person name="Bouvet O."/>
            <person name="Calteau A."/>
            <person name="Chiapello H."/>
            <person name="Clermont O."/>
            <person name="Cruveiller S."/>
            <person name="Danchin A."/>
            <person name="Diard M."/>
            <person name="Dossat C."/>
            <person name="Karoui M.E."/>
            <person name="Frapy E."/>
            <person name="Garry L."/>
            <person name="Ghigo J.M."/>
            <person name="Gilles A.M."/>
            <person name="Johnson J."/>
            <person name="Le Bouguenec C."/>
            <person name="Lescat M."/>
            <person name="Mangenot S."/>
            <person name="Martinez-Jehanne V."/>
            <person name="Matic I."/>
            <person name="Nassif X."/>
            <person name="Oztas S."/>
            <person name="Petit M.A."/>
            <person name="Pichon C."/>
            <person name="Rouy Z."/>
            <person name="Ruf C.S."/>
            <person name="Schneider D."/>
            <person name="Tourret J."/>
            <person name="Vacherie B."/>
            <person name="Vallenet D."/>
            <person name="Medigue C."/>
            <person name="Rocha E.P.C."/>
            <person name="Denamur E."/>
        </authorList>
    </citation>
    <scope>NUCLEOTIDE SEQUENCE [LARGE SCALE GENOMIC DNA]</scope>
    <source>
        <strain>ED1a</strain>
    </source>
</reference>
<evidence type="ECO:0000255" key="1">
    <source>
        <dbReference type="HAMAP-Rule" id="MF_00711"/>
    </source>
</evidence>